<keyword id="KW-1185">Reference proteome</keyword>
<keyword id="KW-0687">Ribonucleoprotein</keyword>
<keyword id="KW-0689">Ribosomal protein</keyword>
<gene>
    <name evidence="1" type="primary">rpmA</name>
    <name type="ordered locus">PSHAa2655</name>
</gene>
<feature type="chain" id="PRO_1000017561" description="Large ribosomal subunit protein bL27">
    <location>
        <begin position="1"/>
        <end position="85"/>
    </location>
</feature>
<feature type="region of interest" description="Disordered" evidence="2">
    <location>
        <begin position="1"/>
        <end position="22"/>
    </location>
</feature>
<protein>
    <recommendedName>
        <fullName evidence="1">Large ribosomal subunit protein bL27</fullName>
    </recommendedName>
    <alternativeName>
        <fullName evidence="3">50S ribosomal protein L27</fullName>
    </alternativeName>
</protein>
<name>RL27_PSET1</name>
<sequence>MAHKKAAGSTRNGRDSESKRLGVKRFGGESVLAGSIIVRQRGTRFHPGTNVGIGKDHTIFAKADGKVQFEQKGPLNRKYVTIVTE</sequence>
<proteinExistence type="inferred from homology"/>
<evidence type="ECO:0000255" key="1">
    <source>
        <dbReference type="HAMAP-Rule" id="MF_00539"/>
    </source>
</evidence>
<evidence type="ECO:0000256" key="2">
    <source>
        <dbReference type="SAM" id="MobiDB-lite"/>
    </source>
</evidence>
<evidence type="ECO:0000305" key="3"/>
<accession>Q3IFF5</accession>
<dbReference type="EMBL" id="CR954246">
    <property type="protein sequence ID" value="CAI87703.1"/>
    <property type="molecule type" value="Genomic_DNA"/>
</dbReference>
<dbReference type="SMR" id="Q3IFF5"/>
<dbReference type="STRING" id="326442.PSHAa2655"/>
<dbReference type="KEGG" id="pha:PSHAa2655"/>
<dbReference type="eggNOG" id="COG0211">
    <property type="taxonomic scope" value="Bacteria"/>
</dbReference>
<dbReference type="HOGENOM" id="CLU_095424_4_1_6"/>
<dbReference type="BioCyc" id="PHAL326442:PSHA_RS13065-MONOMER"/>
<dbReference type="Proteomes" id="UP000006843">
    <property type="component" value="Chromosome I"/>
</dbReference>
<dbReference type="GO" id="GO:0022625">
    <property type="term" value="C:cytosolic large ribosomal subunit"/>
    <property type="evidence" value="ECO:0007669"/>
    <property type="project" value="TreeGrafter"/>
</dbReference>
<dbReference type="GO" id="GO:0003735">
    <property type="term" value="F:structural constituent of ribosome"/>
    <property type="evidence" value="ECO:0007669"/>
    <property type="project" value="InterPro"/>
</dbReference>
<dbReference type="GO" id="GO:0006412">
    <property type="term" value="P:translation"/>
    <property type="evidence" value="ECO:0007669"/>
    <property type="project" value="UniProtKB-UniRule"/>
</dbReference>
<dbReference type="FunFam" id="2.40.50.100:FF:000001">
    <property type="entry name" value="50S ribosomal protein L27"/>
    <property type="match status" value="1"/>
</dbReference>
<dbReference type="Gene3D" id="2.40.50.100">
    <property type="match status" value="1"/>
</dbReference>
<dbReference type="HAMAP" id="MF_00539">
    <property type="entry name" value="Ribosomal_bL27"/>
    <property type="match status" value="1"/>
</dbReference>
<dbReference type="InterPro" id="IPR001684">
    <property type="entry name" value="Ribosomal_bL27"/>
</dbReference>
<dbReference type="InterPro" id="IPR018261">
    <property type="entry name" value="Ribosomal_bL27_CS"/>
</dbReference>
<dbReference type="NCBIfam" id="TIGR00062">
    <property type="entry name" value="L27"/>
    <property type="match status" value="1"/>
</dbReference>
<dbReference type="PANTHER" id="PTHR15893:SF0">
    <property type="entry name" value="LARGE RIBOSOMAL SUBUNIT PROTEIN BL27M"/>
    <property type="match status" value="1"/>
</dbReference>
<dbReference type="PANTHER" id="PTHR15893">
    <property type="entry name" value="RIBOSOMAL PROTEIN L27"/>
    <property type="match status" value="1"/>
</dbReference>
<dbReference type="Pfam" id="PF01016">
    <property type="entry name" value="Ribosomal_L27"/>
    <property type="match status" value="1"/>
</dbReference>
<dbReference type="PRINTS" id="PR00063">
    <property type="entry name" value="RIBOSOMALL27"/>
</dbReference>
<dbReference type="SUPFAM" id="SSF110324">
    <property type="entry name" value="Ribosomal L27 protein-like"/>
    <property type="match status" value="1"/>
</dbReference>
<dbReference type="PROSITE" id="PS00831">
    <property type="entry name" value="RIBOSOMAL_L27"/>
    <property type="match status" value="1"/>
</dbReference>
<organism>
    <name type="scientific">Pseudoalteromonas translucida (strain TAC 125)</name>
    <dbReference type="NCBI Taxonomy" id="326442"/>
    <lineage>
        <taxon>Bacteria</taxon>
        <taxon>Pseudomonadati</taxon>
        <taxon>Pseudomonadota</taxon>
        <taxon>Gammaproteobacteria</taxon>
        <taxon>Alteromonadales</taxon>
        <taxon>Pseudoalteromonadaceae</taxon>
        <taxon>Pseudoalteromonas</taxon>
    </lineage>
</organism>
<comment type="similarity">
    <text evidence="1">Belongs to the bacterial ribosomal protein bL27 family.</text>
</comment>
<reference key="1">
    <citation type="journal article" date="2005" name="Genome Res.">
        <title>Coping with cold: the genome of the versatile marine Antarctica bacterium Pseudoalteromonas haloplanktis TAC125.</title>
        <authorList>
            <person name="Medigue C."/>
            <person name="Krin E."/>
            <person name="Pascal G."/>
            <person name="Barbe V."/>
            <person name="Bernsel A."/>
            <person name="Bertin P.N."/>
            <person name="Cheung F."/>
            <person name="Cruveiller S."/>
            <person name="D'Amico S."/>
            <person name="Duilio A."/>
            <person name="Fang G."/>
            <person name="Feller G."/>
            <person name="Ho C."/>
            <person name="Mangenot S."/>
            <person name="Marino G."/>
            <person name="Nilsson J."/>
            <person name="Parrilli E."/>
            <person name="Rocha E.P.C."/>
            <person name="Rouy Z."/>
            <person name="Sekowska A."/>
            <person name="Tutino M.L."/>
            <person name="Vallenet D."/>
            <person name="von Heijne G."/>
            <person name="Danchin A."/>
        </authorList>
    </citation>
    <scope>NUCLEOTIDE SEQUENCE [LARGE SCALE GENOMIC DNA]</scope>
    <source>
        <strain>TAC 125</strain>
    </source>
</reference>